<feature type="chain" id="PRO_0000215291" description="Transcription factor RFX3">
    <location>
        <begin position="1"/>
        <end position="749"/>
    </location>
</feature>
<feature type="DNA-binding region" description="RFX-type winged-helix" evidence="2">
    <location>
        <begin position="183"/>
        <end position="258"/>
    </location>
</feature>
<feature type="region of interest" description="Disordered" evidence="3">
    <location>
        <begin position="663"/>
        <end position="699"/>
    </location>
</feature>
<feature type="compositionally biased region" description="Acidic residues" evidence="3">
    <location>
        <begin position="674"/>
        <end position="687"/>
    </location>
</feature>
<feature type="compositionally biased region" description="Basic and acidic residues" evidence="3">
    <location>
        <begin position="688"/>
        <end position="698"/>
    </location>
</feature>
<feature type="splice variant" id="VSP_007628" description="In isoform 2." evidence="9">
    <location>
        <begin position="159"/>
        <end position="183"/>
    </location>
</feature>
<feature type="splice variant" id="VSP_007629" description="In isoform 2." evidence="9">
    <original>SNLSEIESRLPKA</original>
    <variation>RSESIGLSDLFSR</variation>
    <location>
        <begin position="401"/>
        <end position="413"/>
    </location>
</feature>
<feature type="splice variant" id="VSP_007630" description="In isoform 2." evidence="9">
    <location>
        <begin position="414"/>
        <end position="749"/>
    </location>
</feature>
<feature type="sequence conflict" description="In Ref. 1; BAC26730." evidence="10" ref="1">
    <original>Q</original>
    <variation>K</variation>
    <location>
        <position position="372"/>
    </location>
</feature>
<feature type="sequence conflict" description="In Ref. 1; BAC26730." evidence="10" ref="1">
    <original>I</original>
    <variation>V</variation>
    <location>
        <position position="459"/>
    </location>
</feature>
<feature type="sequence conflict" description="In Ref. 1; BAC26730." evidence="10" ref="1">
    <original>Q</original>
    <variation>H</variation>
    <location>
        <position position="494"/>
    </location>
</feature>
<keyword id="KW-0025">Alternative splicing</keyword>
<keyword id="KW-0217">Developmental protein</keyword>
<keyword id="KW-0221">Differentiation</keyword>
<keyword id="KW-0238">DNA-binding</keyword>
<keyword id="KW-0539">Nucleus</keyword>
<keyword id="KW-1185">Reference proteome</keyword>
<keyword id="KW-0678">Repressor</keyword>
<keyword id="KW-0804">Transcription</keyword>
<keyword id="KW-0805">Transcription regulation</keyword>
<name>RFX3_MOUSE</name>
<accession>P48381</accession>
<accession>Q8BLW2</accession>
<accession>Q8C0R3</accession>
<accession>Q8VBY6</accession>
<organism>
    <name type="scientific">Mus musculus</name>
    <name type="common">Mouse</name>
    <dbReference type="NCBI Taxonomy" id="10090"/>
    <lineage>
        <taxon>Eukaryota</taxon>
        <taxon>Metazoa</taxon>
        <taxon>Chordata</taxon>
        <taxon>Craniata</taxon>
        <taxon>Vertebrata</taxon>
        <taxon>Euteleostomi</taxon>
        <taxon>Mammalia</taxon>
        <taxon>Eutheria</taxon>
        <taxon>Euarchontoglires</taxon>
        <taxon>Glires</taxon>
        <taxon>Rodentia</taxon>
        <taxon>Myomorpha</taxon>
        <taxon>Muroidea</taxon>
        <taxon>Muridae</taxon>
        <taxon>Murinae</taxon>
        <taxon>Mus</taxon>
        <taxon>Mus</taxon>
    </lineage>
</organism>
<comment type="function">
    <text evidence="1 4 6 7 8">Transcription factor required for ciliogenesis and islet cell differentiation during endocrine pancreas development. Essential for the differentiation of nodal monocilia and left-right asymmetry specification during embryogenesis. Required for the biogenesis of motile cilia by governing growth and beating efficiency of motile cells (PubMed:15121860, PubMed:19671664). Also required for ciliated ependymal cell differentiation (PubMed:16930429). Together with RFX6, participates in the differentiation of 4 of the 5 islet cell types during endocrine pancreas development, with the exception of pancreatic PP (polypeptide-producing) cells (PubMed:17229940). Regulates transcription by forming a heterodimer with another RFX protein and binding to the X-box in the promoter of target genes (By similarity). Regulates the expression of genes involved in ciliary assembly (DYNC2LI1, FOXJ1 and BBS4) and genes involved in ciliary motility (DNAH11, DNAH9 and DNAH5). Represses transcription of MAP1A in non-neuronal cells but not in neuronal cells.</text>
</comment>
<comment type="subunit">
    <text evidence="1 5">Heterodimer; heterodimerizes with RFX1 and RFX2, and RFX6.</text>
</comment>
<comment type="subcellular location">
    <subcellularLocation>
        <location evidence="2 8">Nucleus</location>
    </subcellularLocation>
</comment>
<comment type="alternative products">
    <event type="alternative splicing"/>
    <isoform>
        <id>P48381-1</id>
        <name>1</name>
        <sequence type="displayed"/>
    </isoform>
    <isoform>
        <id>P48381-2</id>
        <name>2</name>
        <sequence type="described" ref="VSP_007628 VSP_007629 VSP_007630"/>
    </isoform>
</comment>
<comment type="tissue specificity">
    <text evidence="4 6 7">Expressed in ciliated cells of the node and in the ciliated ependymal cells of the subcommissural organ (SCO), choroid plexuses (CP) and ventricular walls during embryonic and postnatal development. Expressed in developing and mature pancreatic endocrine cells during embryogenesis and in adults (at protein level).</text>
</comment>
<comment type="disruption phenotype">
    <text evidence="4 6 7">High rate of embryonic lethality. 2 peaks of death are observed: approximately half of the embryos die around days 11 or 12 of embryonic development. Of the embryos that survive past this stage, approximately two-thirds die at birth. Surviving mice are systematically smaller. Their body weights at birth are approximately one-third lower. This growth retardation increases with age, and the body weights that adult male or female mice attain are less than half those of wild-type mice. Mice exhibit a pronounced defect in nodal cilia: cilia are present but remain markedly stunted. Mice also suffer from hydrocephalus without stenosis of the aqueduct of Sylvius. In pancreatic endocrine cells, primary cilia are reduced in number and severely stunted: this ciliary abnormality is associated with a developmental defect leading to an altered cellular composition of the islets of Langerhans. Just before birth, islets contain considerably less insulin-, glucagon-, and ghrelin-producing cells, whereas pancreatic PP (polypeptide-producing) cells are markedly increased in number. In adult mice, the defect leads to small and disorganized islets, reduced insulin production, and impaired glucose tolerance.</text>
</comment>
<comment type="similarity">
    <text evidence="2">Belongs to the RFX family.</text>
</comment>
<proteinExistence type="evidence at protein level"/>
<gene>
    <name type="primary">Rfx3</name>
</gene>
<dbReference type="EMBL" id="AK030008">
    <property type="protein sequence ID" value="BAC26730.1"/>
    <property type="molecule type" value="mRNA"/>
</dbReference>
<dbReference type="EMBL" id="AK041120">
    <property type="protein sequence ID" value="BAC30829.1"/>
    <property type="molecule type" value="mRNA"/>
</dbReference>
<dbReference type="EMBL" id="BC017598">
    <property type="protein sequence ID" value="AAH17598.1"/>
    <property type="molecule type" value="mRNA"/>
</dbReference>
<dbReference type="EMBL" id="X76090">
    <property type="protein sequence ID" value="CAA53704.1"/>
    <property type="molecule type" value="mRNA"/>
</dbReference>
<dbReference type="CCDS" id="CCDS29725.1">
    <molecule id="P48381-1"/>
</dbReference>
<dbReference type="PIR" id="E55926">
    <property type="entry name" value="E55926"/>
</dbReference>
<dbReference type="RefSeq" id="NP_001159886.1">
    <molecule id="P48381-1"/>
    <property type="nucleotide sequence ID" value="NM_001166414.2"/>
</dbReference>
<dbReference type="RefSeq" id="NP_035395.2">
    <molecule id="P48381-1"/>
    <property type="nucleotide sequence ID" value="NM_011265.3"/>
</dbReference>
<dbReference type="RefSeq" id="XP_006526845.1">
    <property type="nucleotide sequence ID" value="XM_006526782.3"/>
</dbReference>
<dbReference type="RefSeq" id="XP_011245471.1">
    <molecule id="P48381-1"/>
    <property type="nucleotide sequence ID" value="XM_011247169.4"/>
</dbReference>
<dbReference type="SMR" id="P48381"/>
<dbReference type="BioGRID" id="202874">
    <property type="interactions" value="1"/>
</dbReference>
<dbReference type="FunCoup" id="P48381">
    <property type="interactions" value="1759"/>
</dbReference>
<dbReference type="IntAct" id="P48381">
    <property type="interactions" value="2"/>
</dbReference>
<dbReference type="MINT" id="P48381"/>
<dbReference type="STRING" id="10090.ENSMUSP00000126313"/>
<dbReference type="GlyGen" id="P48381">
    <property type="glycosylation" value="1 site"/>
</dbReference>
<dbReference type="iPTMnet" id="P48381"/>
<dbReference type="PhosphoSitePlus" id="P48381"/>
<dbReference type="SwissPalm" id="P48381"/>
<dbReference type="PaxDb" id="10090-ENSMUSP00000133461"/>
<dbReference type="PeptideAtlas" id="P48381"/>
<dbReference type="ProteomicsDB" id="253232">
    <molecule id="P48381-1"/>
</dbReference>
<dbReference type="ProteomicsDB" id="253233">
    <molecule id="P48381-2"/>
</dbReference>
<dbReference type="Antibodypedia" id="23939">
    <property type="antibodies" value="246 antibodies from 32 providers"/>
</dbReference>
<dbReference type="DNASU" id="19726"/>
<dbReference type="Ensembl" id="ENSMUST00000165566.8">
    <molecule id="P48381-1"/>
    <property type="protein sequence ID" value="ENSMUSP00000126313.2"/>
    <property type="gene ID" value="ENSMUSG00000040929.18"/>
</dbReference>
<dbReference type="Ensembl" id="ENSMUST00000172907.8">
    <molecule id="P48381-1"/>
    <property type="protein sequence ID" value="ENSMUSP00000134141.2"/>
    <property type="gene ID" value="ENSMUSG00000040929.18"/>
</dbReference>
<dbReference type="Ensembl" id="ENSMUST00000174850.8">
    <molecule id="P48381-1"/>
    <property type="protein sequence ID" value="ENSMUSP00000133461.2"/>
    <property type="gene ID" value="ENSMUSG00000040929.18"/>
</dbReference>
<dbReference type="GeneID" id="19726"/>
<dbReference type="KEGG" id="mmu:19726"/>
<dbReference type="UCSC" id="uc008hcb.2">
    <molecule id="P48381-1"/>
    <property type="organism name" value="mouse"/>
</dbReference>
<dbReference type="UCSC" id="uc008hcd.3">
    <molecule id="P48381-2"/>
    <property type="organism name" value="mouse"/>
</dbReference>
<dbReference type="AGR" id="MGI:106582"/>
<dbReference type="CTD" id="5991"/>
<dbReference type="MGI" id="MGI:106582">
    <property type="gene designation" value="Rfx3"/>
</dbReference>
<dbReference type="VEuPathDB" id="HostDB:ENSMUSG00000040929"/>
<dbReference type="eggNOG" id="KOG3712">
    <property type="taxonomic scope" value="Eukaryota"/>
</dbReference>
<dbReference type="GeneTree" id="ENSGT01050000244879"/>
<dbReference type="InParanoid" id="P48381"/>
<dbReference type="OMA" id="FYRNSSM"/>
<dbReference type="OrthoDB" id="10056949at2759"/>
<dbReference type="PhylomeDB" id="P48381"/>
<dbReference type="TreeFam" id="TF321340"/>
<dbReference type="BioGRID-ORCS" id="19726">
    <property type="hits" value="2 hits in 76 CRISPR screens"/>
</dbReference>
<dbReference type="ChiTaRS" id="Rfx3">
    <property type="organism name" value="mouse"/>
</dbReference>
<dbReference type="PRO" id="PR:P48381"/>
<dbReference type="Proteomes" id="UP000000589">
    <property type="component" value="Chromosome 19"/>
</dbReference>
<dbReference type="RNAct" id="P48381">
    <property type="molecule type" value="protein"/>
</dbReference>
<dbReference type="Bgee" id="ENSMUSG00000040929">
    <property type="expression patterns" value="Expressed in olfactory epithelium and 225 other cell types or tissues"/>
</dbReference>
<dbReference type="ExpressionAtlas" id="P48381">
    <property type="expression patterns" value="baseline and differential"/>
</dbReference>
<dbReference type="GO" id="GO:0000785">
    <property type="term" value="C:chromatin"/>
    <property type="evidence" value="ECO:0000314"/>
    <property type="project" value="BHF-UCL"/>
</dbReference>
<dbReference type="GO" id="GO:0005576">
    <property type="term" value="C:extracellular region"/>
    <property type="evidence" value="ECO:0007669"/>
    <property type="project" value="GOC"/>
</dbReference>
<dbReference type="GO" id="GO:0005634">
    <property type="term" value="C:nucleus"/>
    <property type="evidence" value="ECO:0007669"/>
    <property type="project" value="UniProtKB-SubCell"/>
</dbReference>
<dbReference type="GO" id="GO:0005667">
    <property type="term" value="C:transcription regulator complex"/>
    <property type="evidence" value="ECO:0000314"/>
    <property type="project" value="BHF-UCL"/>
</dbReference>
<dbReference type="GO" id="GO:0003700">
    <property type="term" value="F:DNA-binding transcription factor activity"/>
    <property type="evidence" value="ECO:0000314"/>
    <property type="project" value="BHF-UCL"/>
</dbReference>
<dbReference type="GO" id="GO:0043565">
    <property type="term" value="F:sequence-specific DNA binding"/>
    <property type="evidence" value="ECO:0000314"/>
    <property type="project" value="MGI"/>
</dbReference>
<dbReference type="GO" id="GO:0000976">
    <property type="term" value="F:transcription cis-regulatory region binding"/>
    <property type="evidence" value="ECO:0000314"/>
    <property type="project" value="UniProtKB"/>
</dbReference>
<dbReference type="GO" id="GO:0048469">
    <property type="term" value="P:cell maturation"/>
    <property type="evidence" value="ECO:0000315"/>
    <property type="project" value="BHF-UCL"/>
</dbReference>
<dbReference type="GO" id="GO:0060271">
    <property type="term" value="P:cilium assembly"/>
    <property type="evidence" value="ECO:0000315"/>
    <property type="project" value="BHF-UCL"/>
</dbReference>
<dbReference type="GO" id="GO:0060285">
    <property type="term" value="P:cilium-dependent cell motility"/>
    <property type="evidence" value="ECO:0000315"/>
    <property type="project" value="UniProtKB"/>
</dbReference>
<dbReference type="GO" id="GO:0007368">
    <property type="term" value="P:determination of left/right symmetry"/>
    <property type="evidence" value="ECO:0000315"/>
    <property type="project" value="MGI"/>
</dbReference>
<dbReference type="GO" id="GO:0006351">
    <property type="term" value="P:DNA-templated transcription"/>
    <property type="evidence" value="ECO:0000315"/>
    <property type="project" value="UniProtKB"/>
</dbReference>
<dbReference type="GO" id="GO:0031018">
    <property type="term" value="P:endocrine pancreas development"/>
    <property type="evidence" value="ECO:0000315"/>
    <property type="project" value="UniProtKB"/>
</dbReference>
<dbReference type="GO" id="GO:0060287">
    <property type="term" value="P:epithelial cilium movement involved in determination of left/right asymmetry"/>
    <property type="evidence" value="ECO:0000315"/>
    <property type="project" value="UniProtKB"/>
</dbReference>
<dbReference type="GO" id="GO:0045892">
    <property type="term" value="P:negative regulation of DNA-templated transcription"/>
    <property type="evidence" value="ECO:0000250"/>
    <property type="project" value="UniProtKB"/>
</dbReference>
<dbReference type="GO" id="GO:0045893">
    <property type="term" value="P:positive regulation of DNA-templated transcription"/>
    <property type="evidence" value="ECO:0000314"/>
    <property type="project" value="BHF-UCL"/>
</dbReference>
<dbReference type="GO" id="GO:0045944">
    <property type="term" value="P:positive regulation of transcription by RNA polymerase II"/>
    <property type="evidence" value="ECO:0000315"/>
    <property type="project" value="BHF-UCL"/>
</dbReference>
<dbReference type="GO" id="GO:2000078">
    <property type="term" value="P:positive regulation of type B pancreatic cell development"/>
    <property type="evidence" value="ECO:0000315"/>
    <property type="project" value="BHF-UCL"/>
</dbReference>
<dbReference type="GO" id="GO:0006355">
    <property type="term" value="P:regulation of DNA-templated transcription"/>
    <property type="evidence" value="ECO:0000315"/>
    <property type="project" value="UniProtKB"/>
</dbReference>
<dbReference type="GO" id="GO:0050796">
    <property type="term" value="P:regulation of insulin secretion"/>
    <property type="evidence" value="ECO:0000315"/>
    <property type="project" value="UniProtKB"/>
</dbReference>
<dbReference type="GO" id="GO:0072560">
    <property type="term" value="P:type B pancreatic cell maturation"/>
    <property type="evidence" value="ECO:0000315"/>
    <property type="project" value="BHF-UCL"/>
</dbReference>
<dbReference type="FunFam" id="1.10.10.10:FF:000017">
    <property type="entry name" value="transcription factor RFX3 isoform X1"/>
    <property type="match status" value="1"/>
</dbReference>
<dbReference type="Gene3D" id="1.10.10.10">
    <property type="entry name" value="Winged helix-like DNA-binding domain superfamily/Winged helix DNA-binding domain"/>
    <property type="match status" value="1"/>
</dbReference>
<dbReference type="InterPro" id="IPR003150">
    <property type="entry name" value="DNA-bd_RFX"/>
</dbReference>
<dbReference type="InterPro" id="IPR039779">
    <property type="entry name" value="RFX-like"/>
</dbReference>
<dbReference type="InterPro" id="IPR007668">
    <property type="entry name" value="RFX1_trans_act"/>
</dbReference>
<dbReference type="InterPro" id="IPR036388">
    <property type="entry name" value="WH-like_DNA-bd_sf"/>
</dbReference>
<dbReference type="InterPro" id="IPR036390">
    <property type="entry name" value="WH_DNA-bd_sf"/>
</dbReference>
<dbReference type="PANTHER" id="PTHR12619">
    <property type="entry name" value="RFX TRANSCRIPTION FACTOR FAMILY"/>
    <property type="match status" value="1"/>
</dbReference>
<dbReference type="PANTHER" id="PTHR12619:SF20">
    <property type="entry name" value="TRANSCRIPTION FACTOR RFX3"/>
    <property type="match status" value="1"/>
</dbReference>
<dbReference type="Pfam" id="PF25340">
    <property type="entry name" value="BCD_RFX"/>
    <property type="match status" value="1"/>
</dbReference>
<dbReference type="Pfam" id="PF04589">
    <property type="entry name" value="RFX1_trans_act"/>
    <property type="match status" value="1"/>
</dbReference>
<dbReference type="Pfam" id="PF02257">
    <property type="entry name" value="RFX_DNA_binding"/>
    <property type="match status" value="1"/>
</dbReference>
<dbReference type="SUPFAM" id="SSF46785">
    <property type="entry name" value="Winged helix' DNA-binding domain"/>
    <property type="match status" value="1"/>
</dbReference>
<dbReference type="PROSITE" id="PS51526">
    <property type="entry name" value="RFX_DBD"/>
    <property type="match status" value="1"/>
</dbReference>
<evidence type="ECO:0000250" key="1">
    <source>
        <dbReference type="UniProtKB" id="P48380"/>
    </source>
</evidence>
<evidence type="ECO:0000255" key="2">
    <source>
        <dbReference type="PROSITE-ProRule" id="PRU00858"/>
    </source>
</evidence>
<evidence type="ECO:0000256" key="3">
    <source>
        <dbReference type="SAM" id="MobiDB-lite"/>
    </source>
</evidence>
<evidence type="ECO:0000269" key="4">
    <source>
    </source>
</evidence>
<evidence type="ECO:0000269" key="5">
    <source>
    </source>
</evidence>
<evidence type="ECO:0000269" key="6">
    <source>
    </source>
</evidence>
<evidence type="ECO:0000269" key="7">
    <source>
    </source>
</evidence>
<evidence type="ECO:0000269" key="8">
    <source>
    </source>
</evidence>
<evidence type="ECO:0000303" key="9">
    <source>
    </source>
</evidence>
<evidence type="ECO:0000305" key="10"/>
<sequence length="749" mass="83512">MQTSETGSDTGSTVTLQTSVASQAAVPTQVVQQVPVQQQVQQVQTVQQVQHVYPAQVQYVEGSDTVYTNGAIRTTTYPYTETQMYSQNTGGNYFDTQGSSAQVTTVVSSHSMVGTGGIQMGVTGGQLISSSGGTYLIGNSMENSGHSVTHTTRASPATIEMAIETLQKSDGLSTHRSSLLNSHLQWLLDNYETAEGVSLPRSTLYNHYLRHCQEHKLDPVNAASFGKLIRSIFMGLRTRRLGTRGNSKYHYYGIRVKPDSPLNRLQEDMQYMAMRQQPMQQKQRYKPMQKVDGVADGFTGSGQQTGTSVEQTVIAQSQHHQQFLDASRALPEFGEVEISSLPDGTTFEDIKSLQSLYREHCEAILDVVVNLQFSLIEKLWQTFWRYSPSTPADGTTITESSNLSEIESRLPKAKLITLCKHESILKWMCNCDHGMYQALVEILIPDVLRPIPSALTQAIRNFAKSLEGWLSNAMNNIPQRMIQTKVAAVSAFAQTLRRYTSLNHLAQAARAVLQNTSQINQMLSDLNRVDFANVQEQASWVCQCDDNMVQRLETDFKMTLQQQSTLEQWAAWLDNVMMQALKPYEGRPSFPKAARQFLLKWSFYSSMVIRDLTLRSAASFGSFHLIRLLYDEYMFYLVEHRVAQVTGETPIAVMGEFGDLNAVSPGNLDKDEGSEVESETDEDLDDSSEPRAKREKTELSQAFPVGCMQPVLESAVQPSLLNPLHSEHIVTSTQTIRQCSATGNTYTAV</sequence>
<reference key="1">
    <citation type="journal article" date="2005" name="Science">
        <title>The transcriptional landscape of the mammalian genome.</title>
        <authorList>
            <person name="Carninci P."/>
            <person name="Kasukawa T."/>
            <person name="Katayama S."/>
            <person name="Gough J."/>
            <person name="Frith M.C."/>
            <person name="Maeda N."/>
            <person name="Oyama R."/>
            <person name="Ravasi T."/>
            <person name="Lenhard B."/>
            <person name="Wells C."/>
            <person name="Kodzius R."/>
            <person name="Shimokawa K."/>
            <person name="Bajic V.B."/>
            <person name="Brenner S.E."/>
            <person name="Batalov S."/>
            <person name="Forrest A.R."/>
            <person name="Zavolan M."/>
            <person name="Davis M.J."/>
            <person name="Wilming L.G."/>
            <person name="Aidinis V."/>
            <person name="Allen J.E."/>
            <person name="Ambesi-Impiombato A."/>
            <person name="Apweiler R."/>
            <person name="Aturaliya R.N."/>
            <person name="Bailey T.L."/>
            <person name="Bansal M."/>
            <person name="Baxter L."/>
            <person name="Beisel K.W."/>
            <person name="Bersano T."/>
            <person name="Bono H."/>
            <person name="Chalk A.M."/>
            <person name="Chiu K.P."/>
            <person name="Choudhary V."/>
            <person name="Christoffels A."/>
            <person name="Clutterbuck D.R."/>
            <person name="Crowe M.L."/>
            <person name="Dalla E."/>
            <person name="Dalrymple B.P."/>
            <person name="de Bono B."/>
            <person name="Della Gatta G."/>
            <person name="di Bernardo D."/>
            <person name="Down T."/>
            <person name="Engstrom P."/>
            <person name="Fagiolini M."/>
            <person name="Faulkner G."/>
            <person name="Fletcher C.F."/>
            <person name="Fukushima T."/>
            <person name="Furuno M."/>
            <person name="Futaki S."/>
            <person name="Gariboldi M."/>
            <person name="Georgii-Hemming P."/>
            <person name="Gingeras T.R."/>
            <person name="Gojobori T."/>
            <person name="Green R.E."/>
            <person name="Gustincich S."/>
            <person name="Harbers M."/>
            <person name="Hayashi Y."/>
            <person name="Hensch T.K."/>
            <person name="Hirokawa N."/>
            <person name="Hill D."/>
            <person name="Huminiecki L."/>
            <person name="Iacono M."/>
            <person name="Ikeo K."/>
            <person name="Iwama A."/>
            <person name="Ishikawa T."/>
            <person name="Jakt M."/>
            <person name="Kanapin A."/>
            <person name="Katoh M."/>
            <person name="Kawasawa Y."/>
            <person name="Kelso J."/>
            <person name="Kitamura H."/>
            <person name="Kitano H."/>
            <person name="Kollias G."/>
            <person name="Krishnan S.P."/>
            <person name="Kruger A."/>
            <person name="Kummerfeld S.K."/>
            <person name="Kurochkin I.V."/>
            <person name="Lareau L.F."/>
            <person name="Lazarevic D."/>
            <person name="Lipovich L."/>
            <person name="Liu J."/>
            <person name="Liuni S."/>
            <person name="McWilliam S."/>
            <person name="Madan Babu M."/>
            <person name="Madera M."/>
            <person name="Marchionni L."/>
            <person name="Matsuda H."/>
            <person name="Matsuzawa S."/>
            <person name="Miki H."/>
            <person name="Mignone F."/>
            <person name="Miyake S."/>
            <person name="Morris K."/>
            <person name="Mottagui-Tabar S."/>
            <person name="Mulder N."/>
            <person name="Nakano N."/>
            <person name="Nakauchi H."/>
            <person name="Ng P."/>
            <person name="Nilsson R."/>
            <person name="Nishiguchi S."/>
            <person name="Nishikawa S."/>
            <person name="Nori F."/>
            <person name="Ohara O."/>
            <person name="Okazaki Y."/>
            <person name="Orlando V."/>
            <person name="Pang K.C."/>
            <person name="Pavan W.J."/>
            <person name="Pavesi G."/>
            <person name="Pesole G."/>
            <person name="Petrovsky N."/>
            <person name="Piazza S."/>
            <person name="Reed J."/>
            <person name="Reid J.F."/>
            <person name="Ring B.Z."/>
            <person name="Ringwald M."/>
            <person name="Rost B."/>
            <person name="Ruan Y."/>
            <person name="Salzberg S.L."/>
            <person name="Sandelin A."/>
            <person name="Schneider C."/>
            <person name="Schoenbach C."/>
            <person name="Sekiguchi K."/>
            <person name="Semple C.A."/>
            <person name="Seno S."/>
            <person name="Sessa L."/>
            <person name="Sheng Y."/>
            <person name="Shibata Y."/>
            <person name="Shimada H."/>
            <person name="Shimada K."/>
            <person name="Silva D."/>
            <person name="Sinclair B."/>
            <person name="Sperling S."/>
            <person name="Stupka E."/>
            <person name="Sugiura K."/>
            <person name="Sultana R."/>
            <person name="Takenaka Y."/>
            <person name="Taki K."/>
            <person name="Tammoja K."/>
            <person name="Tan S.L."/>
            <person name="Tang S."/>
            <person name="Taylor M.S."/>
            <person name="Tegner J."/>
            <person name="Teichmann S.A."/>
            <person name="Ueda H.R."/>
            <person name="van Nimwegen E."/>
            <person name="Verardo R."/>
            <person name="Wei C.L."/>
            <person name="Yagi K."/>
            <person name="Yamanishi H."/>
            <person name="Zabarovsky E."/>
            <person name="Zhu S."/>
            <person name="Zimmer A."/>
            <person name="Hide W."/>
            <person name="Bult C."/>
            <person name="Grimmond S.M."/>
            <person name="Teasdale R.D."/>
            <person name="Liu E.T."/>
            <person name="Brusic V."/>
            <person name="Quackenbush J."/>
            <person name="Wahlestedt C."/>
            <person name="Mattick J.S."/>
            <person name="Hume D.A."/>
            <person name="Kai C."/>
            <person name="Sasaki D."/>
            <person name="Tomaru Y."/>
            <person name="Fukuda S."/>
            <person name="Kanamori-Katayama M."/>
            <person name="Suzuki M."/>
            <person name="Aoki J."/>
            <person name="Arakawa T."/>
            <person name="Iida J."/>
            <person name="Imamura K."/>
            <person name="Itoh M."/>
            <person name="Kato T."/>
            <person name="Kawaji H."/>
            <person name="Kawagashira N."/>
            <person name="Kawashima T."/>
            <person name="Kojima M."/>
            <person name="Kondo S."/>
            <person name="Konno H."/>
            <person name="Nakano K."/>
            <person name="Ninomiya N."/>
            <person name="Nishio T."/>
            <person name="Okada M."/>
            <person name="Plessy C."/>
            <person name="Shibata K."/>
            <person name="Shiraki T."/>
            <person name="Suzuki S."/>
            <person name="Tagami M."/>
            <person name="Waki K."/>
            <person name="Watahiki A."/>
            <person name="Okamura-Oho Y."/>
            <person name="Suzuki H."/>
            <person name="Kawai J."/>
            <person name="Hayashizaki Y."/>
        </authorList>
    </citation>
    <scope>NUCLEOTIDE SEQUENCE [LARGE SCALE MRNA] (ISOFORMS 1 AND 2)</scope>
    <source>
        <strain>C57BL/6J</strain>
        <tissue>Aorta</tissue>
        <tissue>Vein</tissue>
    </source>
</reference>
<reference key="2">
    <citation type="journal article" date="2004" name="Genome Res.">
        <title>The status, quality, and expansion of the NIH full-length cDNA project: the Mammalian Gene Collection (MGC).</title>
        <authorList>
            <consortium name="The MGC Project Team"/>
        </authorList>
    </citation>
    <scope>NUCLEOTIDE SEQUENCE [LARGE SCALE MRNA] (ISOFORM 1)</scope>
    <source>
        <tissue>Mammary gland</tissue>
    </source>
</reference>
<reference key="3">
    <citation type="journal article" date="1994" name="Mol. Cell. Biol.">
        <title>RFX1, a transactivator of hepatitis B virus enhancer I, belongs to a novel family of homodimeric and heterodimeric DNA-binding proteins.</title>
        <authorList>
            <person name="Reith W."/>
            <person name="Ucla C."/>
            <person name="Barras E."/>
            <person name="Gaud A."/>
            <person name="Durand B."/>
            <person name="Herrero-Sanchez C."/>
            <person name="Kobr M."/>
            <person name="Mach B."/>
        </authorList>
    </citation>
    <scope>NUCLEOTIDE SEQUENCE [MRNA] OF 137-325 (ISOFORM 1)</scope>
    <source>
        <strain>BALB/cJ</strain>
        <tissue>Spleen</tissue>
    </source>
</reference>
<reference key="4">
    <citation type="journal article" date="2004" name="Biol. Reprod.">
        <title>RFX2 is a potential transcriptional regulatory factor for histone H1t and other genes expressed during the meiotic phase of spermatogenesis.</title>
        <authorList>
            <person name="Horvath G.C."/>
            <person name="Kistler W.S."/>
            <person name="Kistler M.K."/>
        </authorList>
    </citation>
    <scope>SUBUNIT</scope>
</reference>
<reference key="5">
    <citation type="journal article" date="2004" name="Mol. Cell. Biol.">
        <title>The transcription factor RFX3 directs nodal cilium development and left-right asymmetry specification.</title>
        <authorList>
            <person name="Bonnafe E."/>
            <person name="Touka M."/>
            <person name="Ait-Lounis A."/>
            <person name="Baas D."/>
            <person name="Barras E."/>
            <person name="Ucla C."/>
            <person name="Moreau A."/>
            <person name="Flamant F."/>
            <person name="Dubruille R."/>
            <person name="Couble P."/>
            <person name="Collignon J."/>
            <person name="Durand B."/>
            <person name="Reith W."/>
        </authorList>
    </citation>
    <scope>FUNCTION</scope>
    <scope>TISSUE SPECIFICITY</scope>
    <scope>DISRUPTION PHENOTYPE</scope>
</reference>
<reference key="6">
    <citation type="journal article" date="2006" name="Eur. J. Neurosci.">
        <title>A deficiency in RFX3 causes hydrocephalus associated with abnormal differentiation of ependymal cells.</title>
        <authorList>
            <person name="Baas D."/>
            <person name="Meiniel A."/>
            <person name="Benadiba C."/>
            <person name="Bonnafe E."/>
            <person name="Meiniel O."/>
            <person name="Reith W."/>
            <person name="Durand B."/>
        </authorList>
    </citation>
    <scope>FUNCTION</scope>
    <scope>TISSUE SPECIFICITY</scope>
    <scope>DISRUPTION PHENOTYPE</scope>
</reference>
<reference key="7">
    <citation type="journal article" date="2007" name="Diabetes">
        <title>Novel function of the ciliogenic transcription factor RFX3 in development of the endocrine pancreas.</title>
        <authorList>
            <person name="Ait-Lounis A."/>
            <person name="Baas D."/>
            <person name="Barras E."/>
            <person name="Benadiba C."/>
            <person name="Charollais A."/>
            <person name="Nlend Nlend R."/>
            <person name="Liegeois D."/>
            <person name="Meda P."/>
            <person name="Durand B."/>
            <person name="Reith W."/>
        </authorList>
    </citation>
    <scope>FUNCTION</scope>
    <scope>TISSUE SPECIFICITY</scope>
    <scope>DISRUPTION PHENOTYPE</scope>
</reference>
<reference key="8">
    <citation type="journal article" date="2009" name="J. Cell Sci.">
        <title>RFX3 governs growth and beating efficiency of motile cilia in mouse and controls the expression of genes involved in human ciliopathies.</title>
        <authorList>
            <person name="El Zein L."/>
            <person name="Ait-Lounis A."/>
            <person name="Morle L."/>
            <person name="Thomas J."/>
            <person name="Chhin B."/>
            <person name="Spassky N."/>
            <person name="Reith W."/>
            <person name="Durand B."/>
        </authorList>
    </citation>
    <scope>FUNCTION</scope>
    <scope>DNA-BINDING</scope>
    <scope>SUBCELLULAR LOCATION</scope>
</reference>
<protein>
    <recommendedName>
        <fullName>Transcription factor RFX3</fullName>
    </recommendedName>
    <alternativeName>
        <fullName>Regulatory factor X 3</fullName>
    </alternativeName>
</protein>